<proteinExistence type="inferred from homology"/>
<feature type="chain" id="PRO_1000002436" description="Holliday junction branch migration complex subunit RuvA">
    <location>
        <begin position="1"/>
        <end position="206"/>
    </location>
</feature>
<feature type="region of interest" description="Domain I" evidence="1">
    <location>
        <begin position="1"/>
        <end position="63"/>
    </location>
</feature>
<feature type="region of interest" description="Domain II" evidence="1">
    <location>
        <begin position="64"/>
        <end position="142"/>
    </location>
</feature>
<feature type="region of interest" description="Flexible linker" evidence="1">
    <location>
        <begin position="143"/>
        <end position="153"/>
    </location>
</feature>
<feature type="region of interest" description="Domain III" evidence="1">
    <location>
        <begin position="154"/>
        <end position="206"/>
    </location>
</feature>
<dbReference type="EMBL" id="AP009044">
    <property type="protein sequence ID" value="BAF54700.1"/>
    <property type="molecule type" value="Genomic_DNA"/>
</dbReference>
<dbReference type="RefSeq" id="WP_003855898.1">
    <property type="nucleotide sequence ID" value="NC_009342.1"/>
</dbReference>
<dbReference type="SMR" id="A4QEN4"/>
<dbReference type="KEGG" id="cgt:cgR_1706"/>
<dbReference type="HOGENOM" id="CLU_087936_2_1_11"/>
<dbReference type="PhylomeDB" id="A4QEN4"/>
<dbReference type="Proteomes" id="UP000006698">
    <property type="component" value="Chromosome"/>
</dbReference>
<dbReference type="GO" id="GO:0005737">
    <property type="term" value="C:cytoplasm"/>
    <property type="evidence" value="ECO:0007669"/>
    <property type="project" value="UniProtKB-SubCell"/>
</dbReference>
<dbReference type="GO" id="GO:0009379">
    <property type="term" value="C:Holliday junction helicase complex"/>
    <property type="evidence" value="ECO:0007669"/>
    <property type="project" value="InterPro"/>
</dbReference>
<dbReference type="GO" id="GO:0048476">
    <property type="term" value="C:Holliday junction resolvase complex"/>
    <property type="evidence" value="ECO:0007669"/>
    <property type="project" value="UniProtKB-UniRule"/>
</dbReference>
<dbReference type="GO" id="GO:0005524">
    <property type="term" value="F:ATP binding"/>
    <property type="evidence" value="ECO:0007669"/>
    <property type="project" value="InterPro"/>
</dbReference>
<dbReference type="GO" id="GO:0000400">
    <property type="term" value="F:four-way junction DNA binding"/>
    <property type="evidence" value="ECO:0007669"/>
    <property type="project" value="UniProtKB-UniRule"/>
</dbReference>
<dbReference type="GO" id="GO:0009378">
    <property type="term" value="F:four-way junction helicase activity"/>
    <property type="evidence" value="ECO:0007669"/>
    <property type="project" value="InterPro"/>
</dbReference>
<dbReference type="GO" id="GO:0006310">
    <property type="term" value="P:DNA recombination"/>
    <property type="evidence" value="ECO:0007669"/>
    <property type="project" value="UniProtKB-UniRule"/>
</dbReference>
<dbReference type="GO" id="GO:0006281">
    <property type="term" value="P:DNA repair"/>
    <property type="evidence" value="ECO:0007669"/>
    <property type="project" value="UniProtKB-UniRule"/>
</dbReference>
<dbReference type="CDD" id="cd14332">
    <property type="entry name" value="UBA_RuvA_C"/>
    <property type="match status" value="1"/>
</dbReference>
<dbReference type="FunFam" id="2.40.50.140:FF:000083">
    <property type="entry name" value="Holliday junction ATP-dependent DNA helicase RuvA"/>
    <property type="match status" value="1"/>
</dbReference>
<dbReference type="Gene3D" id="1.10.150.20">
    <property type="entry name" value="5' to 3' exonuclease, C-terminal subdomain"/>
    <property type="match status" value="1"/>
</dbReference>
<dbReference type="Gene3D" id="1.10.8.10">
    <property type="entry name" value="DNA helicase RuvA subunit, C-terminal domain"/>
    <property type="match status" value="1"/>
</dbReference>
<dbReference type="Gene3D" id="2.40.50.140">
    <property type="entry name" value="Nucleic acid-binding proteins"/>
    <property type="match status" value="1"/>
</dbReference>
<dbReference type="HAMAP" id="MF_00031">
    <property type="entry name" value="DNA_HJ_migration_RuvA"/>
    <property type="match status" value="1"/>
</dbReference>
<dbReference type="InterPro" id="IPR013849">
    <property type="entry name" value="DNA_helicase_Holl-junc_RuvA_I"/>
</dbReference>
<dbReference type="InterPro" id="IPR012340">
    <property type="entry name" value="NA-bd_OB-fold"/>
</dbReference>
<dbReference type="InterPro" id="IPR000085">
    <property type="entry name" value="RuvA"/>
</dbReference>
<dbReference type="InterPro" id="IPR010994">
    <property type="entry name" value="RuvA_2-like"/>
</dbReference>
<dbReference type="InterPro" id="IPR011114">
    <property type="entry name" value="RuvA_C"/>
</dbReference>
<dbReference type="InterPro" id="IPR036267">
    <property type="entry name" value="RuvA_C_sf"/>
</dbReference>
<dbReference type="NCBIfam" id="TIGR00084">
    <property type="entry name" value="ruvA"/>
    <property type="match status" value="1"/>
</dbReference>
<dbReference type="Pfam" id="PF14520">
    <property type="entry name" value="HHH_5"/>
    <property type="match status" value="1"/>
</dbReference>
<dbReference type="Pfam" id="PF07499">
    <property type="entry name" value="RuvA_C"/>
    <property type="match status" value="1"/>
</dbReference>
<dbReference type="Pfam" id="PF01330">
    <property type="entry name" value="RuvA_N"/>
    <property type="match status" value="1"/>
</dbReference>
<dbReference type="SUPFAM" id="SSF46929">
    <property type="entry name" value="DNA helicase RuvA subunit, C-terminal domain"/>
    <property type="match status" value="1"/>
</dbReference>
<dbReference type="SUPFAM" id="SSF50249">
    <property type="entry name" value="Nucleic acid-binding proteins"/>
    <property type="match status" value="1"/>
</dbReference>
<dbReference type="SUPFAM" id="SSF47781">
    <property type="entry name" value="RuvA domain 2-like"/>
    <property type="match status" value="1"/>
</dbReference>
<sequence length="206" mass="21461">MIASLRGTVINIGLSSAVIECNGVGYEVVTTPNTLSQLVRGEEALVLTTMVVREDAMKLYGFIDNESREMFSVLQTVSGLGPRLALACESVLSPLEISQAITNADAKALQRVPGVGKRMADRLIVELKGKVAAFAAGVVDEAGEQISLPNANIASEVVVEQVSQALVGLGFSEKQSDDAVSFVLAADPSLDTSGALRAALAKLSGK</sequence>
<keyword id="KW-0963">Cytoplasm</keyword>
<keyword id="KW-0227">DNA damage</keyword>
<keyword id="KW-0233">DNA recombination</keyword>
<keyword id="KW-0234">DNA repair</keyword>
<keyword id="KW-0238">DNA-binding</keyword>
<comment type="function">
    <text evidence="1">The RuvA-RuvB-RuvC complex processes Holliday junction (HJ) DNA during genetic recombination and DNA repair, while the RuvA-RuvB complex plays an important role in the rescue of blocked DNA replication forks via replication fork reversal (RFR). RuvA specifically binds to HJ cruciform DNA, conferring on it an open structure. The RuvB hexamer acts as an ATP-dependent pump, pulling dsDNA into and through the RuvAB complex. HJ branch migration allows RuvC to scan DNA until it finds its consensus sequence, where it cleaves and resolves the cruciform DNA.</text>
</comment>
<comment type="subunit">
    <text evidence="1">Homotetramer. Forms an RuvA(8)-RuvB(12)-Holliday junction (HJ) complex. HJ DNA is sandwiched between 2 RuvA tetramers; dsDNA enters through RuvA and exits via RuvB. An RuvB hexamer assembles on each DNA strand where it exits the tetramer. Each RuvB hexamer is contacted by two RuvA subunits (via domain III) on 2 adjacent RuvB subunits; this complex drives branch migration. In the full resolvosome a probable DNA-RuvA(4)-RuvB(12)-RuvC(2) complex forms which resolves the HJ.</text>
</comment>
<comment type="subcellular location">
    <subcellularLocation>
        <location evidence="1">Cytoplasm</location>
    </subcellularLocation>
</comment>
<comment type="domain">
    <text evidence="1">Has three domains with a flexible linker between the domains II and III and assumes an 'L' shape. Domain III is highly mobile and contacts RuvB.</text>
</comment>
<comment type="similarity">
    <text evidence="1">Belongs to the RuvA family.</text>
</comment>
<evidence type="ECO:0000255" key="1">
    <source>
        <dbReference type="HAMAP-Rule" id="MF_00031"/>
    </source>
</evidence>
<reference key="1">
    <citation type="journal article" date="2007" name="Microbiology">
        <title>Comparative analysis of the Corynebacterium glutamicum group and complete genome sequence of strain R.</title>
        <authorList>
            <person name="Yukawa H."/>
            <person name="Omumasaba C.A."/>
            <person name="Nonaka H."/>
            <person name="Kos P."/>
            <person name="Okai N."/>
            <person name="Suzuki N."/>
            <person name="Suda M."/>
            <person name="Tsuge Y."/>
            <person name="Watanabe J."/>
            <person name="Ikeda Y."/>
            <person name="Vertes A.A."/>
            <person name="Inui M."/>
        </authorList>
    </citation>
    <scope>NUCLEOTIDE SEQUENCE [LARGE SCALE GENOMIC DNA]</scope>
    <source>
        <strain>R</strain>
    </source>
</reference>
<protein>
    <recommendedName>
        <fullName evidence="1">Holliday junction branch migration complex subunit RuvA</fullName>
    </recommendedName>
</protein>
<gene>
    <name evidence="1" type="primary">ruvA</name>
    <name type="ordered locus">cgR_1706</name>
</gene>
<accession>A4QEN4</accession>
<name>RUVA_CORGB</name>
<organism>
    <name type="scientific">Corynebacterium glutamicum (strain R)</name>
    <dbReference type="NCBI Taxonomy" id="340322"/>
    <lineage>
        <taxon>Bacteria</taxon>
        <taxon>Bacillati</taxon>
        <taxon>Actinomycetota</taxon>
        <taxon>Actinomycetes</taxon>
        <taxon>Mycobacteriales</taxon>
        <taxon>Corynebacteriaceae</taxon>
        <taxon>Corynebacterium</taxon>
    </lineage>
</organism>